<reference key="1">
    <citation type="journal article" date="2011" name="J. Bacteriol.">
        <title>Genome of Ochrobactrum anthropi ATCC 49188 T, a versatile opportunistic pathogen and symbiont of several eukaryotic hosts.</title>
        <authorList>
            <person name="Chain P.S."/>
            <person name="Lang D.M."/>
            <person name="Comerci D.J."/>
            <person name="Malfatti S.A."/>
            <person name="Vergez L.M."/>
            <person name="Shin M."/>
            <person name="Ugalde R.A."/>
            <person name="Garcia E."/>
            <person name="Tolmasky M.E."/>
        </authorList>
    </citation>
    <scope>NUCLEOTIDE SEQUENCE [LARGE SCALE GENOMIC DNA]</scope>
    <source>
        <strain>ATCC 49188 / DSM 6882 / CCUG 24695 / JCM 21032 / LMG 3331 / NBRC 15819 / NCTC 12168 / Alc 37</strain>
    </source>
</reference>
<name>CTAA_BRUA4</name>
<gene>
    <name evidence="1" type="primary">ctaA</name>
    <name type="ordered locus">Oant_2502</name>
</gene>
<proteinExistence type="inferred from homology"/>
<protein>
    <recommendedName>
        <fullName evidence="1">Heme A synthase</fullName>
        <shortName evidence="1">HAS</shortName>
        <ecNumber evidence="1">1.17.99.9</ecNumber>
    </recommendedName>
    <alternativeName>
        <fullName evidence="1">Cytochrome aa3-controlling protein</fullName>
    </alternativeName>
</protein>
<feature type="chain" id="PRO_0000349055" description="Heme A synthase">
    <location>
        <begin position="1"/>
        <end position="357"/>
    </location>
</feature>
<feature type="transmembrane region" description="Helical" evidence="1">
    <location>
        <begin position="24"/>
        <end position="44"/>
    </location>
</feature>
<feature type="transmembrane region" description="Helical" evidence="1">
    <location>
        <begin position="110"/>
        <end position="130"/>
    </location>
</feature>
<feature type="transmembrane region" description="Helical" evidence="1">
    <location>
        <begin position="140"/>
        <end position="160"/>
    </location>
</feature>
<feature type="transmembrane region" description="Helical" evidence="1">
    <location>
        <begin position="175"/>
        <end position="195"/>
    </location>
</feature>
<feature type="transmembrane region" description="Helical" evidence="1">
    <location>
        <begin position="209"/>
        <end position="229"/>
    </location>
</feature>
<feature type="transmembrane region" description="Helical" evidence="1">
    <location>
        <begin position="274"/>
        <end position="294"/>
    </location>
</feature>
<feature type="transmembrane region" description="Helical" evidence="1">
    <location>
        <begin position="303"/>
        <end position="323"/>
    </location>
</feature>
<feature type="transmembrane region" description="Helical" evidence="1">
    <location>
        <begin position="325"/>
        <end position="345"/>
    </location>
</feature>
<feature type="binding site" description="axial binding residue" evidence="1">
    <location>
        <position position="272"/>
    </location>
    <ligand>
        <name>heme</name>
        <dbReference type="ChEBI" id="CHEBI:30413"/>
    </ligand>
    <ligandPart>
        <name>Fe</name>
        <dbReference type="ChEBI" id="CHEBI:18248"/>
    </ligandPart>
</feature>
<feature type="binding site" description="axial binding residue" evidence="1">
    <location>
        <position position="333"/>
    </location>
    <ligand>
        <name>heme</name>
        <dbReference type="ChEBI" id="CHEBI:30413"/>
    </ligand>
    <ligandPart>
        <name>Fe</name>
        <dbReference type="ChEBI" id="CHEBI:18248"/>
    </ligandPart>
</feature>
<organism>
    <name type="scientific">Brucella anthropi (strain ATCC 49188 / DSM 6882 / CCUG 24695 / JCM 21032 / LMG 3331 / NBRC 15819 / NCTC 12168 / Alc 37)</name>
    <name type="common">Ochrobactrum anthropi</name>
    <dbReference type="NCBI Taxonomy" id="439375"/>
    <lineage>
        <taxon>Bacteria</taxon>
        <taxon>Pseudomonadati</taxon>
        <taxon>Pseudomonadota</taxon>
        <taxon>Alphaproteobacteria</taxon>
        <taxon>Hyphomicrobiales</taxon>
        <taxon>Brucellaceae</taxon>
        <taxon>Brucella/Ochrobactrum group</taxon>
        <taxon>Brucella</taxon>
    </lineage>
</organism>
<dbReference type="EC" id="1.17.99.9" evidence="1"/>
<dbReference type="EMBL" id="CP000758">
    <property type="protein sequence ID" value="ABS15215.1"/>
    <property type="molecule type" value="Genomic_DNA"/>
</dbReference>
<dbReference type="RefSeq" id="WP_012092325.1">
    <property type="nucleotide sequence ID" value="NC_009667.1"/>
</dbReference>
<dbReference type="SMR" id="A6X1W1"/>
<dbReference type="STRING" id="439375.Oant_2502"/>
<dbReference type="KEGG" id="oan:Oant_2502"/>
<dbReference type="PATRIC" id="fig|439375.7.peg.2635"/>
<dbReference type="eggNOG" id="COG1612">
    <property type="taxonomic scope" value="Bacteria"/>
</dbReference>
<dbReference type="HOGENOM" id="CLU_017627_0_0_5"/>
<dbReference type="UniPathway" id="UPA00269">
    <property type="reaction ID" value="UER00713"/>
</dbReference>
<dbReference type="Proteomes" id="UP000002301">
    <property type="component" value="Chromosome 1"/>
</dbReference>
<dbReference type="GO" id="GO:0005886">
    <property type="term" value="C:plasma membrane"/>
    <property type="evidence" value="ECO:0007669"/>
    <property type="project" value="UniProtKB-SubCell"/>
</dbReference>
<dbReference type="GO" id="GO:0046872">
    <property type="term" value="F:metal ion binding"/>
    <property type="evidence" value="ECO:0007669"/>
    <property type="project" value="UniProtKB-KW"/>
</dbReference>
<dbReference type="GO" id="GO:0016653">
    <property type="term" value="F:oxidoreductase activity, acting on NAD(P)H, heme protein as acceptor"/>
    <property type="evidence" value="ECO:0007669"/>
    <property type="project" value="InterPro"/>
</dbReference>
<dbReference type="GO" id="GO:0006784">
    <property type="term" value="P:heme A biosynthetic process"/>
    <property type="evidence" value="ECO:0007669"/>
    <property type="project" value="UniProtKB-UniRule"/>
</dbReference>
<dbReference type="HAMAP" id="MF_01665">
    <property type="entry name" value="HemeA_synth_type2"/>
    <property type="match status" value="1"/>
</dbReference>
<dbReference type="InterPro" id="IPR003780">
    <property type="entry name" value="COX15/CtaA_fam"/>
</dbReference>
<dbReference type="InterPro" id="IPR023754">
    <property type="entry name" value="HemeA_Synthase_type2"/>
</dbReference>
<dbReference type="PANTHER" id="PTHR23289">
    <property type="entry name" value="CYTOCHROME C OXIDASE ASSEMBLY PROTEIN COX15"/>
    <property type="match status" value="1"/>
</dbReference>
<dbReference type="PANTHER" id="PTHR23289:SF2">
    <property type="entry name" value="CYTOCHROME C OXIDASE ASSEMBLY PROTEIN COX15 HOMOLOG"/>
    <property type="match status" value="1"/>
</dbReference>
<dbReference type="Pfam" id="PF02628">
    <property type="entry name" value="COX15-CtaA"/>
    <property type="match status" value="1"/>
</dbReference>
<accession>A6X1W1</accession>
<keyword id="KW-1003">Cell membrane</keyword>
<keyword id="KW-0350">Heme biosynthesis</keyword>
<keyword id="KW-0408">Iron</keyword>
<keyword id="KW-0472">Membrane</keyword>
<keyword id="KW-0479">Metal-binding</keyword>
<keyword id="KW-0560">Oxidoreductase</keyword>
<keyword id="KW-1185">Reference proteome</keyword>
<keyword id="KW-0812">Transmembrane</keyword>
<keyword id="KW-1133">Transmembrane helix</keyword>
<evidence type="ECO:0000255" key="1">
    <source>
        <dbReference type="HAMAP-Rule" id="MF_01665"/>
    </source>
</evidence>
<comment type="function">
    <text evidence="1">Catalyzes the conversion of heme O to heme A by two successive hydroxylations of the methyl group at C8. The first hydroxylation forms heme I, the second hydroxylation results in an unstable dihydroxymethyl group, which spontaneously dehydrates, resulting in the formyl group of heme A.</text>
</comment>
<comment type="catalytic activity">
    <reaction evidence="1">
        <text>Fe(II)-heme o + 2 A + H2O = Fe(II)-heme a + 2 AH2</text>
        <dbReference type="Rhea" id="RHEA:63388"/>
        <dbReference type="ChEBI" id="CHEBI:13193"/>
        <dbReference type="ChEBI" id="CHEBI:15377"/>
        <dbReference type="ChEBI" id="CHEBI:17499"/>
        <dbReference type="ChEBI" id="CHEBI:60530"/>
        <dbReference type="ChEBI" id="CHEBI:61715"/>
        <dbReference type="EC" id="1.17.99.9"/>
    </reaction>
    <physiologicalReaction direction="left-to-right" evidence="1">
        <dbReference type="Rhea" id="RHEA:63389"/>
    </physiologicalReaction>
</comment>
<comment type="cofactor">
    <cofactor evidence="1">
        <name>heme b</name>
        <dbReference type="ChEBI" id="CHEBI:60344"/>
    </cofactor>
</comment>
<comment type="pathway">
    <text evidence="1">Porphyrin-containing compound metabolism; heme A biosynthesis; heme A from heme O: step 1/1.</text>
</comment>
<comment type="subunit">
    <text evidence="1">Interacts with CtaB.</text>
</comment>
<comment type="subcellular location">
    <subcellularLocation>
        <location evidence="1">Cell membrane</location>
        <topology evidence="1">Multi-pass membrane protein</topology>
    </subcellularLocation>
</comment>
<comment type="similarity">
    <text evidence="1">Belongs to the COX15/CtaA family. Type 2 subfamily.</text>
</comment>
<sequence>MTAATAQRIGQGSRSSKEDRDRRLVRYWLYAVFVVLIAIVMVGGATRMTGSGLSITEWKPIHGVIPPLNHAEWLEEFDKYRQIPQYQQINKGMSLEAFQSIFWWEWAHRMLARFVGFLVAVPLAFFWVTGRLKGGLKYRMLGLLALGGLQGAIGWWMVASGLSELTSVSQYRLAIHLTTACIIITAVFYIARGLVTYSERPAERSIQRFAGWIVFAVLVQIYLGGLVAGLHAGLTYNTWPLMDGAVIPSDLFIQSPWWRNLFENPKTVQFVHRMFAYTVLVLTVLHSLQVWKQVPGTTHARRTIVLVGLVLIQAVIGIATLLMSVPLHLGLTHQFFALIVLAFAVAHWRATKGAYEG</sequence>